<protein>
    <recommendedName>
        <fullName evidence="1">Anti-adapter protein IraD</fullName>
    </recommendedName>
</protein>
<gene>
    <name evidence="1" type="primary">iraD</name>
    <name type="ordered locus">ECUMN_4935</name>
</gene>
<name>IRAD_ECOLU</name>
<evidence type="ECO:0000255" key="1">
    <source>
        <dbReference type="HAMAP-Rule" id="MF_02010"/>
    </source>
</evidence>
<reference key="1">
    <citation type="journal article" date="2009" name="PLoS Genet.">
        <title>Organised genome dynamics in the Escherichia coli species results in highly diverse adaptive paths.</title>
        <authorList>
            <person name="Touchon M."/>
            <person name="Hoede C."/>
            <person name="Tenaillon O."/>
            <person name="Barbe V."/>
            <person name="Baeriswyl S."/>
            <person name="Bidet P."/>
            <person name="Bingen E."/>
            <person name="Bonacorsi S."/>
            <person name="Bouchier C."/>
            <person name="Bouvet O."/>
            <person name="Calteau A."/>
            <person name="Chiapello H."/>
            <person name="Clermont O."/>
            <person name="Cruveiller S."/>
            <person name="Danchin A."/>
            <person name="Diard M."/>
            <person name="Dossat C."/>
            <person name="Karoui M.E."/>
            <person name="Frapy E."/>
            <person name="Garry L."/>
            <person name="Ghigo J.M."/>
            <person name="Gilles A.M."/>
            <person name="Johnson J."/>
            <person name="Le Bouguenec C."/>
            <person name="Lescat M."/>
            <person name="Mangenot S."/>
            <person name="Martinez-Jehanne V."/>
            <person name="Matic I."/>
            <person name="Nassif X."/>
            <person name="Oztas S."/>
            <person name="Petit M.A."/>
            <person name="Pichon C."/>
            <person name="Rouy Z."/>
            <person name="Ruf C.S."/>
            <person name="Schneider D."/>
            <person name="Tourret J."/>
            <person name="Vacherie B."/>
            <person name="Vallenet D."/>
            <person name="Medigue C."/>
            <person name="Rocha E.P.C."/>
            <person name="Denamur E."/>
        </authorList>
    </citation>
    <scope>NUCLEOTIDE SEQUENCE [LARGE SCALE GENOMIC DNA]</scope>
    <source>
        <strain>UMN026 / ExPEC</strain>
    </source>
</reference>
<sequence>MMRQSLQAVLPEISGNKTSSLRKSVCSDLLTLFNSPHSALPSLLVSGMPEWQVHNPSDKHLQSWYCRQLRSALLFHEPRIAALQVNLKEAYCHTLAISLEIMLYHDDEPLTFDLVWDNGGWRSATLENVS</sequence>
<feature type="chain" id="PRO_1000189482" description="Anti-adapter protein IraD">
    <location>
        <begin position="1"/>
        <end position="130"/>
    </location>
</feature>
<organism>
    <name type="scientific">Escherichia coli O17:K52:H18 (strain UMN026 / ExPEC)</name>
    <dbReference type="NCBI Taxonomy" id="585056"/>
    <lineage>
        <taxon>Bacteria</taxon>
        <taxon>Pseudomonadati</taxon>
        <taxon>Pseudomonadota</taxon>
        <taxon>Gammaproteobacteria</taxon>
        <taxon>Enterobacterales</taxon>
        <taxon>Enterobacteriaceae</taxon>
        <taxon>Escherichia</taxon>
    </lineage>
</organism>
<dbReference type="EMBL" id="CU928163">
    <property type="protein sequence ID" value="CAR16046.1"/>
    <property type="molecule type" value="Genomic_DNA"/>
</dbReference>
<dbReference type="RefSeq" id="WP_001309187.1">
    <property type="nucleotide sequence ID" value="NC_011751.1"/>
</dbReference>
<dbReference type="RefSeq" id="YP_002415514.1">
    <property type="nucleotide sequence ID" value="NC_011751.1"/>
</dbReference>
<dbReference type="SMR" id="B7NGY3"/>
<dbReference type="STRING" id="585056.ECUMN_4935"/>
<dbReference type="KEGG" id="eum:ECUMN_4935"/>
<dbReference type="PATRIC" id="fig|585056.7.peg.5098"/>
<dbReference type="HOGENOM" id="CLU_1977621_0_0_6"/>
<dbReference type="Proteomes" id="UP000007097">
    <property type="component" value="Chromosome"/>
</dbReference>
<dbReference type="GO" id="GO:0005737">
    <property type="term" value="C:cytoplasm"/>
    <property type="evidence" value="ECO:0007669"/>
    <property type="project" value="UniProtKB-SubCell"/>
</dbReference>
<dbReference type="GO" id="GO:0043856">
    <property type="term" value="F:anti-sigma factor antagonist activity"/>
    <property type="evidence" value="ECO:0007669"/>
    <property type="project" value="InterPro"/>
</dbReference>
<dbReference type="GO" id="GO:0034599">
    <property type="term" value="P:cellular response to oxidative stress"/>
    <property type="evidence" value="ECO:0007669"/>
    <property type="project" value="UniProtKB-UniRule"/>
</dbReference>
<dbReference type="GO" id="GO:0006974">
    <property type="term" value="P:DNA damage response"/>
    <property type="evidence" value="ECO:0007669"/>
    <property type="project" value="InterPro"/>
</dbReference>
<dbReference type="HAMAP" id="MF_02010">
    <property type="entry name" value="IraD"/>
    <property type="match status" value="1"/>
</dbReference>
<dbReference type="InterPro" id="IPR023776">
    <property type="entry name" value="Anti-adapt_IraD"/>
</dbReference>
<dbReference type="InterPro" id="IPR007048">
    <property type="entry name" value="IraD/Gp25-like"/>
</dbReference>
<dbReference type="NCBIfam" id="NF010726">
    <property type="entry name" value="PRK14128.1-1"/>
    <property type="match status" value="1"/>
</dbReference>
<dbReference type="NCBIfam" id="NF010728">
    <property type="entry name" value="PRK14128.1-3"/>
    <property type="match status" value="1"/>
</dbReference>
<dbReference type="Pfam" id="PF04965">
    <property type="entry name" value="GPW_gp25"/>
    <property type="match status" value="1"/>
</dbReference>
<dbReference type="SUPFAM" id="SSF160719">
    <property type="entry name" value="gpW/gp25-like"/>
    <property type="match status" value="1"/>
</dbReference>
<accession>B7NGY3</accession>
<keyword id="KW-0963">Cytoplasm</keyword>
<keyword id="KW-0346">Stress response</keyword>
<proteinExistence type="inferred from homology"/>
<comment type="function">
    <text evidence="1">Inhibits RpoS proteolysis by regulating RssB activity, thereby increasing the stability of the sigma stress factor RpoS during oxidative stress. Its effect on RpoS stability is due to its interaction with RssB, which probably blocks the interaction of RssB with RpoS, and the consequent delivery of the RssB-RpoS complex to the ClpXP protein degradation pathway.</text>
</comment>
<comment type="subunit">
    <text evidence="1">Interacts with RssB.</text>
</comment>
<comment type="subcellular location">
    <subcellularLocation>
        <location evidence="1">Cytoplasm</location>
    </subcellularLocation>
</comment>
<comment type="similarity">
    <text evidence="1">Belongs to the GpW/Gp25 family. IraD subfamily.</text>
</comment>